<sequence>MTSLESSYLDVVAFIFREARLLDDRSWDEWLECYDPEAVFWMPCWDDADTLVDDPRKHVSLIYYSDRMGLEDRVFRLRSERSGASTPEPRTTHNIANVEILERTERQIEARFNWHTMNYRYKLLDHYFGTSFYTLKVSSSGLSILNKKVVLKNDLIHQVIDVYHV</sequence>
<evidence type="ECO:0000269" key="1">
    <source>
    </source>
</evidence>
<evidence type="ECO:0000305" key="2"/>
<keyword id="KW-0058">Aromatic hydrocarbons catabolism</keyword>
<keyword id="KW-0223">Dioxygenase</keyword>
<keyword id="KW-0903">Direct protein sequencing</keyword>
<keyword id="KW-0520">NAD</keyword>
<keyword id="KW-0560">Oxidoreductase</keyword>
<keyword id="KW-0614">Plasmid</keyword>
<reference key="1">
    <citation type="journal article" date="1995" name="J. Bacteriol.">
        <title>Cloning, nucleotide sequence, and expression of the plasmid-encoded genes for the two-component 2-halobenzoate 1,2-dioxygenase from Pseudomonas cepacia 2CBS.</title>
        <authorList>
            <person name="Haak B."/>
            <person name="Fetzner S."/>
            <person name="Lingens F."/>
        </authorList>
    </citation>
    <scope>NUCLEOTIDE SEQUENCE [GENOMIC DNA]</scope>
    <source>
        <strain>2CBS</strain>
    </source>
</reference>
<reference key="2">
    <citation type="journal article" date="1992" name="J. Bacteriol.">
        <title>Purification and some properties of 2-halobenzoate 1,2-dioxygenase, a two-component enzyme system from Pseudomonas cepacia 2CBS.</title>
        <authorList>
            <person name="Fetzner S."/>
            <person name="Mueller R."/>
            <person name="Lingens F."/>
        </authorList>
    </citation>
    <scope>PROTEIN SEQUENCE OF 2-15</scope>
    <scope>CHARACTERIZATION</scope>
    <source>
        <strain>2CBS</strain>
    </source>
</reference>
<dbReference type="EC" id="1.14.12.13"/>
<dbReference type="EMBL" id="X79076">
    <property type="protein sequence ID" value="CAA55682.1"/>
    <property type="molecule type" value="Genomic_DNA"/>
</dbReference>
<dbReference type="SMR" id="Q51602"/>
<dbReference type="KEGG" id="ag:CAA55682"/>
<dbReference type="BioCyc" id="MetaCyc:MONOMER-14764"/>
<dbReference type="UniPathway" id="UPA00233"/>
<dbReference type="GO" id="GO:0018626">
    <property type="term" value="F:2-chlorobenzoate 1,2-dioxygenase activity"/>
    <property type="evidence" value="ECO:0007669"/>
    <property type="project" value="UniProtKB-EC"/>
</dbReference>
<dbReference type="GO" id="GO:0019380">
    <property type="term" value="P:3-phenylpropionate catabolic process"/>
    <property type="evidence" value="ECO:0007669"/>
    <property type="project" value="TreeGrafter"/>
</dbReference>
<dbReference type="GO" id="GO:0010128">
    <property type="term" value="P:benzoate catabolic process via CoA ligation"/>
    <property type="evidence" value="ECO:0007669"/>
    <property type="project" value="UniProtKB-UniPathway"/>
</dbReference>
<dbReference type="CDD" id="cd00667">
    <property type="entry name" value="ring_hydroxylating_dioxygenases_beta"/>
    <property type="match status" value="1"/>
</dbReference>
<dbReference type="Gene3D" id="3.10.450.50">
    <property type="match status" value="1"/>
</dbReference>
<dbReference type="InterPro" id="IPR017641">
    <property type="entry name" value="Benzo_1-2-diOase_ssu"/>
</dbReference>
<dbReference type="InterPro" id="IPR032710">
    <property type="entry name" value="NTF2-like_dom_sf"/>
</dbReference>
<dbReference type="InterPro" id="IPR000391">
    <property type="entry name" value="Rng_hydr_dOase-bsu"/>
</dbReference>
<dbReference type="NCBIfam" id="TIGR03232">
    <property type="entry name" value="benzo_1_2_benB"/>
    <property type="match status" value="1"/>
</dbReference>
<dbReference type="PANTHER" id="PTHR41534">
    <property type="entry name" value="BLR3401 PROTEIN"/>
    <property type="match status" value="1"/>
</dbReference>
<dbReference type="PANTHER" id="PTHR41534:SF1">
    <property type="entry name" value="BLR3401 PROTEIN"/>
    <property type="match status" value="1"/>
</dbReference>
<dbReference type="Pfam" id="PF00866">
    <property type="entry name" value="Ring_hydroxyl_B"/>
    <property type="match status" value="1"/>
</dbReference>
<dbReference type="SUPFAM" id="SSF54427">
    <property type="entry name" value="NTF2-like"/>
    <property type="match status" value="1"/>
</dbReference>
<proteinExistence type="evidence at protein level"/>
<organism>
    <name type="scientific">Burkholderia cepacia</name>
    <name type="common">Pseudomonas cepacia</name>
    <dbReference type="NCBI Taxonomy" id="292"/>
    <lineage>
        <taxon>Bacteria</taxon>
        <taxon>Pseudomonadati</taxon>
        <taxon>Pseudomonadota</taxon>
        <taxon>Betaproteobacteria</taxon>
        <taxon>Burkholderiales</taxon>
        <taxon>Burkholderiaceae</taxon>
        <taxon>Burkholderia</taxon>
        <taxon>Burkholderia cepacia complex</taxon>
    </lineage>
</organism>
<name>CBDB_BURCE</name>
<gene>
    <name type="primary">cbdB</name>
</gene>
<feature type="initiator methionine" description="Removed" evidence="1">
    <location>
        <position position="1"/>
    </location>
</feature>
<feature type="chain" id="PRO_0000085071" description="2-halobenzoate 1,2-dioxygenase small subunit">
    <location>
        <begin position="2"/>
        <end position="165"/>
    </location>
</feature>
<feature type="sequence conflict" description="In Ref. 1; CAA55682." evidence="2" ref="1">
    <original>V</original>
    <variation>C</variation>
    <location>
        <position position="12"/>
    </location>
</feature>
<protein>
    <recommendedName>
        <fullName>2-halobenzoate 1,2-dioxygenase small subunit</fullName>
        <ecNumber>1.14.12.13</ecNumber>
    </recommendedName>
    <alternativeName>
        <fullName>2-chlorobenzoate 1,2-dioxygenase</fullName>
    </alternativeName>
</protein>
<geneLocation type="plasmid">
    <name>pBAH1</name>
</geneLocation>
<comment type="function">
    <text>Component of 2-halobenzoate dioxygenase multicomponent enzyme system which catalyzes the incorporation of both atoms of molecular oxygen into 2-halobenzoate to form catechol.</text>
</comment>
<comment type="catalytic activity">
    <reaction>
        <text>a 2-halobenzoate + NADH + O2 + H(+) = a halide anion + catechol + CO2 + NAD(+)</text>
        <dbReference type="Rhea" id="RHEA:53736"/>
        <dbReference type="ChEBI" id="CHEBI:15378"/>
        <dbReference type="ChEBI" id="CHEBI:15379"/>
        <dbReference type="ChEBI" id="CHEBI:16042"/>
        <dbReference type="ChEBI" id="CHEBI:16526"/>
        <dbReference type="ChEBI" id="CHEBI:18135"/>
        <dbReference type="ChEBI" id="CHEBI:57540"/>
        <dbReference type="ChEBI" id="CHEBI:57945"/>
        <dbReference type="ChEBI" id="CHEBI:70856"/>
        <dbReference type="EC" id="1.14.12.13"/>
    </reaction>
</comment>
<comment type="pathway">
    <text>Xenobiotic degradation; benzoate degradation via CoA ligation.</text>
</comment>
<comment type="subunit">
    <text>Heterohexamer of 3 large (CbdA) subunits and 3 small (CbdB) subunits. The heterohexamer is part of 2-halobenzoate dioxygenase two component enzyme system. The other component is a NADH:acceptor reductase (CdbC).</text>
</comment>
<comment type="similarity">
    <text evidence="2">Belongs to the bacterial ring-hydroxylating dioxygenase beta subunit family.</text>
</comment>
<accession>Q51602</accession>
<accession>O08067</accession>